<accession>Q5H4N2</accession>
<protein>
    <recommendedName>
        <fullName evidence="1">Probable cytosol aminopeptidase</fullName>
        <ecNumber evidence="1">3.4.11.1</ecNumber>
    </recommendedName>
    <alternativeName>
        <fullName evidence="1">Leucine aminopeptidase</fullName>
        <shortName evidence="1">LAP</shortName>
        <ecNumber evidence="1">3.4.11.10</ecNumber>
    </alternativeName>
    <alternativeName>
        <fullName evidence="1">Leucyl aminopeptidase</fullName>
    </alternativeName>
</protein>
<feature type="chain" id="PRO_1000020002" description="Probable cytosol aminopeptidase">
    <location>
        <begin position="1"/>
        <end position="490"/>
    </location>
</feature>
<feature type="active site" evidence="1">
    <location>
        <position position="274"/>
    </location>
</feature>
<feature type="active site" evidence="1">
    <location>
        <position position="348"/>
    </location>
</feature>
<feature type="binding site" evidence="1">
    <location>
        <position position="262"/>
    </location>
    <ligand>
        <name>Mn(2+)</name>
        <dbReference type="ChEBI" id="CHEBI:29035"/>
        <label>2</label>
    </ligand>
</feature>
<feature type="binding site" evidence="1">
    <location>
        <position position="267"/>
    </location>
    <ligand>
        <name>Mn(2+)</name>
        <dbReference type="ChEBI" id="CHEBI:29035"/>
        <label>1</label>
    </ligand>
</feature>
<feature type="binding site" evidence="1">
    <location>
        <position position="267"/>
    </location>
    <ligand>
        <name>Mn(2+)</name>
        <dbReference type="ChEBI" id="CHEBI:29035"/>
        <label>2</label>
    </ligand>
</feature>
<feature type="binding site" evidence="1">
    <location>
        <position position="285"/>
    </location>
    <ligand>
        <name>Mn(2+)</name>
        <dbReference type="ChEBI" id="CHEBI:29035"/>
        <label>2</label>
    </ligand>
</feature>
<feature type="binding site" evidence="1">
    <location>
        <position position="344"/>
    </location>
    <ligand>
        <name>Mn(2+)</name>
        <dbReference type="ChEBI" id="CHEBI:29035"/>
        <label>1</label>
    </ligand>
</feature>
<feature type="binding site" evidence="1">
    <location>
        <position position="346"/>
    </location>
    <ligand>
        <name>Mn(2+)</name>
        <dbReference type="ChEBI" id="CHEBI:29035"/>
        <label>1</label>
    </ligand>
</feature>
<feature type="binding site" evidence="1">
    <location>
        <position position="346"/>
    </location>
    <ligand>
        <name>Mn(2+)</name>
        <dbReference type="ChEBI" id="CHEBI:29035"/>
        <label>2</label>
    </ligand>
</feature>
<feature type="strand" evidence="2">
    <location>
        <begin position="4"/>
        <end position="8"/>
    </location>
</feature>
<feature type="turn" evidence="2">
    <location>
        <begin position="12"/>
        <end position="14"/>
    </location>
</feature>
<feature type="strand" evidence="2">
    <location>
        <begin position="17"/>
        <end position="24"/>
    </location>
</feature>
<feature type="helix" evidence="2">
    <location>
        <begin position="32"/>
        <end position="40"/>
    </location>
</feature>
<feature type="helix" evidence="2">
    <location>
        <begin position="44"/>
        <end position="50"/>
    </location>
</feature>
<feature type="strand" evidence="2">
    <location>
        <begin position="61"/>
        <end position="65"/>
    </location>
</feature>
<feature type="strand" evidence="2">
    <location>
        <begin position="71"/>
        <end position="79"/>
    </location>
</feature>
<feature type="helix" evidence="2">
    <location>
        <begin position="83"/>
        <end position="85"/>
    </location>
</feature>
<feature type="helix" evidence="2">
    <location>
        <begin position="88"/>
        <end position="102"/>
    </location>
</feature>
<feature type="strand" evidence="2">
    <location>
        <begin position="103"/>
        <end position="106"/>
    </location>
</feature>
<feature type="strand" evidence="2">
    <location>
        <begin position="108"/>
        <end position="112"/>
    </location>
</feature>
<feature type="helix" evidence="2">
    <location>
        <begin position="114"/>
        <end position="116"/>
    </location>
</feature>
<feature type="helix" evidence="2">
    <location>
        <begin position="124"/>
        <end position="139"/>
    </location>
</feature>
<feature type="strand" evidence="2">
    <location>
        <begin position="158"/>
        <end position="163"/>
    </location>
</feature>
<feature type="helix" evidence="2">
    <location>
        <begin position="166"/>
        <end position="187"/>
    </location>
</feature>
<feature type="turn" evidence="2">
    <location>
        <begin position="190"/>
        <end position="192"/>
    </location>
</feature>
<feature type="helix" evidence="2">
    <location>
        <begin position="195"/>
        <end position="206"/>
    </location>
</feature>
<feature type="strand" evidence="2">
    <location>
        <begin position="212"/>
        <end position="217"/>
    </location>
</feature>
<feature type="helix" evidence="2">
    <location>
        <begin position="219"/>
        <end position="224"/>
    </location>
</feature>
<feature type="helix" evidence="2">
    <location>
        <begin position="228"/>
        <end position="234"/>
    </location>
</feature>
<feature type="strand" evidence="2">
    <location>
        <begin position="242"/>
        <end position="249"/>
    </location>
</feature>
<feature type="turn" evidence="2">
    <location>
        <begin position="250"/>
        <end position="253"/>
    </location>
</feature>
<feature type="strand" evidence="2">
    <location>
        <begin position="257"/>
        <end position="261"/>
    </location>
</feature>
<feature type="strand" evidence="2">
    <location>
        <begin position="263"/>
        <end position="267"/>
    </location>
</feature>
<feature type="helix" evidence="2">
    <location>
        <begin position="279"/>
        <end position="286"/>
    </location>
</feature>
<feature type="helix" evidence="2">
    <location>
        <begin position="287"/>
        <end position="301"/>
    </location>
</feature>
<feature type="strand" evidence="2">
    <location>
        <begin position="305"/>
        <end position="317"/>
    </location>
</feature>
<feature type="strand" evidence="2">
    <location>
        <begin position="329"/>
        <end position="331"/>
    </location>
</feature>
<feature type="strand" evidence="2">
    <location>
        <begin position="337"/>
        <end position="339"/>
    </location>
</feature>
<feature type="helix" evidence="2">
    <location>
        <begin position="347"/>
        <end position="358"/>
    </location>
</feature>
<feature type="helix" evidence="2">
    <location>
        <begin position="359"/>
        <end position="361"/>
    </location>
</feature>
<feature type="strand" evidence="2">
    <location>
        <begin position="364"/>
        <end position="370"/>
    </location>
</feature>
<feature type="helix" evidence="2">
    <location>
        <begin position="374"/>
        <end position="380"/>
    </location>
</feature>
<feature type="turn" evidence="2">
    <location>
        <begin position="381"/>
        <end position="383"/>
    </location>
</feature>
<feature type="strand" evidence="2">
    <location>
        <begin position="385"/>
        <end position="390"/>
    </location>
</feature>
<feature type="helix" evidence="2">
    <location>
        <begin position="392"/>
        <end position="404"/>
    </location>
</feature>
<feature type="strand" evidence="2">
    <location>
        <begin position="409"/>
        <end position="411"/>
    </location>
</feature>
<feature type="helix" evidence="2">
    <location>
        <begin position="416"/>
        <end position="422"/>
    </location>
</feature>
<feature type="strand" evidence="2">
    <location>
        <begin position="425"/>
        <end position="431"/>
    </location>
</feature>
<feature type="helix" evidence="2">
    <location>
        <begin position="438"/>
        <end position="447"/>
    </location>
</feature>
<feature type="strand" evidence="2">
    <location>
        <begin position="455"/>
        <end position="459"/>
    </location>
</feature>
<feature type="turn" evidence="2">
    <location>
        <begin position="461"/>
        <end position="463"/>
    </location>
</feature>
<feature type="helix" evidence="2">
    <location>
        <begin position="478"/>
        <end position="489"/>
    </location>
</feature>
<gene>
    <name evidence="1" type="primary">pepA</name>
    <name type="ordered locus">XOO0834</name>
</gene>
<name>AMPA_XANOR</name>
<comment type="function">
    <text evidence="1">Presumably involved in the processing and regular turnover of intracellular proteins. Catalyzes the removal of unsubstituted N-terminal amino acids from various peptides.</text>
</comment>
<comment type="catalytic activity">
    <reaction evidence="1">
        <text>Release of an N-terminal amino acid, Xaa-|-Yaa-, in which Xaa is preferably Leu, but may be other amino acids including Pro although not Arg or Lys, and Yaa may be Pro. Amino acid amides and methyl esters are also readily hydrolyzed, but rates on arylamides are exceedingly low.</text>
        <dbReference type="EC" id="3.4.11.1"/>
    </reaction>
</comment>
<comment type="catalytic activity">
    <reaction evidence="1">
        <text>Release of an N-terminal amino acid, preferentially leucine, but not glutamic or aspartic acids.</text>
        <dbReference type="EC" id="3.4.11.10"/>
    </reaction>
</comment>
<comment type="cofactor">
    <cofactor evidence="1">
        <name>Mn(2+)</name>
        <dbReference type="ChEBI" id="CHEBI:29035"/>
    </cofactor>
    <text evidence="1">Binds 2 manganese ions per subunit.</text>
</comment>
<comment type="subcellular location">
    <subcellularLocation>
        <location evidence="1">Cytoplasm</location>
    </subcellularLocation>
</comment>
<comment type="similarity">
    <text evidence="1">Belongs to the peptidase M17 family.</text>
</comment>
<proteinExistence type="evidence at protein level"/>
<sequence>MALQFTLNQDAPASAAVDCIVVGAFADKTLSPAAQALDSASQGRLTALLARGDVAGKTGSTTLLHDLPGVAAPRVLVVGLGDAGKFGVAPYLKAIGDATRALKTGAVGTALLTLTELTVKARDAAWNIRQAVTVSDHAAYRYTATLGKKKVDETGLTTLAIAGDDARALAVGVATAEGVEFARELGNLPPNYCTPAYLADTAAAFAGKFPGAEAEILDEAQMEALGMGSLLSVARGSANRPRLIVLKWNGGGDARPYVLVGKGITFDTGGVNLKTQGGIEEMKYDMCGGATVIGTFVATVKAELPINLVVVVPAVENAIDGNAYRPSDVITSMSGKTIEVGNTDAEGRLILCDALTYAERFNPEALVDVATLTGACMVALGHQTAGLMSKHDDLANELLAAGEHVFDRAWRLPLWDEYQGLLDSTFADVYNIGGRWGGAITAGCFLSRFTENQRWAHLDIAGVASDEGKRGMATGRPVGLLTQWLLDRAA</sequence>
<dbReference type="EC" id="3.4.11.1" evidence="1"/>
<dbReference type="EC" id="3.4.11.10" evidence="1"/>
<dbReference type="EMBL" id="AE013598">
    <property type="protein sequence ID" value="AAW74088.1"/>
    <property type="molecule type" value="Genomic_DNA"/>
</dbReference>
<dbReference type="PDB" id="3JRU">
    <property type="method" value="X-ray"/>
    <property type="resolution" value="2.60 A"/>
    <property type="chains" value="A/B=1-490"/>
</dbReference>
<dbReference type="PDBsum" id="3JRU"/>
<dbReference type="SMR" id="Q5H4N2"/>
<dbReference type="STRING" id="291331.XOO0834"/>
<dbReference type="MEROPS" id="M17.003"/>
<dbReference type="KEGG" id="xoo:XOO0834"/>
<dbReference type="PATRIC" id="fig|291331.8.peg.932"/>
<dbReference type="HOGENOM" id="CLU_013734_0_1_6"/>
<dbReference type="BRENDA" id="3.4.11.1">
    <property type="organism ID" value="6717"/>
</dbReference>
<dbReference type="EvolutionaryTrace" id="Q5H4N2"/>
<dbReference type="Proteomes" id="UP000006735">
    <property type="component" value="Chromosome"/>
</dbReference>
<dbReference type="GO" id="GO:0005737">
    <property type="term" value="C:cytoplasm"/>
    <property type="evidence" value="ECO:0007669"/>
    <property type="project" value="UniProtKB-SubCell"/>
</dbReference>
<dbReference type="GO" id="GO:0030145">
    <property type="term" value="F:manganese ion binding"/>
    <property type="evidence" value="ECO:0007669"/>
    <property type="project" value="UniProtKB-UniRule"/>
</dbReference>
<dbReference type="GO" id="GO:0070006">
    <property type="term" value="F:metalloaminopeptidase activity"/>
    <property type="evidence" value="ECO:0007669"/>
    <property type="project" value="InterPro"/>
</dbReference>
<dbReference type="GO" id="GO:0006508">
    <property type="term" value="P:proteolysis"/>
    <property type="evidence" value="ECO:0007669"/>
    <property type="project" value="UniProtKB-KW"/>
</dbReference>
<dbReference type="CDD" id="cd00433">
    <property type="entry name" value="Peptidase_M17"/>
    <property type="match status" value="1"/>
</dbReference>
<dbReference type="Gene3D" id="3.40.220.10">
    <property type="entry name" value="Leucine Aminopeptidase, subunit E, domain 1"/>
    <property type="match status" value="1"/>
</dbReference>
<dbReference type="Gene3D" id="3.40.630.10">
    <property type="entry name" value="Zn peptidases"/>
    <property type="match status" value="1"/>
</dbReference>
<dbReference type="HAMAP" id="MF_00181">
    <property type="entry name" value="Cytosol_peptidase_M17"/>
    <property type="match status" value="1"/>
</dbReference>
<dbReference type="InterPro" id="IPR011356">
    <property type="entry name" value="Leucine_aapep/pepB"/>
</dbReference>
<dbReference type="InterPro" id="IPR043472">
    <property type="entry name" value="Macro_dom-like"/>
</dbReference>
<dbReference type="InterPro" id="IPR000819">
    <property type="entry name" value="Peptidase_M17_C"/>
</dbReference>
<dbReference type="InterPro" id="IPR023042">
    <property type="entry name" value="Peptidase_M17_leu_NH2_pept"/>
</dbReference>
<dbReference type="InterPro" id="IPR008283">
    <property type="entry name" value="Peptidase_M17_N"/>
</dbReference>
<dbReference type="NCBIfam" id="NF002074">
    <property type="entry name" value="PRK00913.1-4"/>
    <property type="match status" value="1"/>
</dbReference>
<dbReference type="PANTHER" id="PTHR11963:SF23">
    <property type="entry name" value="CYTOSOL AMINOPEPTIDASE"/>
    <property type="match status" value="1"/>
</dbReference>
<dbReference type="PANTHER" id="PTHR11963">
    <property type="entry name" value="LEUCINE AMINOPEPTIDASE-RELATED"/>
    <property type="match status" value="1"/>
</dbReference>
<dbReference type="Pfam" id="PF00883">
    <property type="entry name" value="Peptidase_M17"/>
    <property type="match status" value="1"/>
</dbReference>
<dbReference type="Pfam" id="PF02789">
    <property type="entry name" value="Peptidase_M17_N"/>
    <property type="match status" value="1"/>
</dbReference>
<dbReference type="PRINTS" id="PR00481">
    <property type="entry name" value="LAMNOPPTDASE"/>
</dbReference>
<dbReference type="SUPFAM" id="SSF52949">
    <property type="entry name" value="Macro domain-like"/>
    <property type="match status" value="1"/>
</dbReference>
<dbReference type="SUPFAM" id="SSF53187">
    <property type="entry name" value="Zn-dependent exopeptidases"/>
    <property type="match status" value="1"/>
</dbReference>
<dbReference type="PROSITE" id="PS00631">
    <property type="entry name" value="CYTOSOL_AP"/>
    <property type="match status" value="1"/>
</dbReference>
<reference key="1">
    <citation type="journal article" date="2005" name="Nucleic Acids Res.">
        <title>The genome sequence of Xanthomonas oryzae pathovar oryzae KACC10331, the bacterial blight pathogen of rice.</title>
        <authorList>
            <person name="Lee B.-M."/>
            <person name="Park Y.-J."/>
            <person name="Park D.-S."/>
            <person name="Kang H.-W."/>
            <person name="Kim J.-G."/>
            <person name="Song E.-S."/>
            <person name="Park I.-C."/>
            <person name="Yoon U.-H."/>
            <person name="Hahn J.-H."/>
            <person name="Koo B.-S."/>
            <person name="Lee G.-B."/>
            <person name="Kim H."/>
            <person name="Park H.-S."/>
            <person name="Yoon K.-O."/>
            <person name="Kim J.-H."/>
            <person name="Jung C.-H."/>
            <person name="Koh N.-H."/>
            <person name="Seo J.-S."/>
            <person name="Go S.-J."/>
        </authorList>
    </citation>
    <scope>NUCLEOTIDE SEQUENCE [LARGE SCALE GENOMIC DNA]</scope>
    <source>
        <strain>KACC10331 / KXO85</strain>
    </source>
</reference>
<keyword id="KW-0002">3D-structure</keyword>
<keyword id="KW-0031">Aminopeptidase</keyword>
<keyword id="KW-0963">Cytoplasm</keyword>
<keyword id="KW-0378">Hydrolase</keyword>
<keyword id="KW-0464">Manganese</keyword>
<keyword id="KW-0479">Metal-binding</keyword>
<keyword id="KW-0645">Protease</keyword>
<keyword id="KW-1185">Reference proteome</keyword>
<evidence type="ECO:0000255" key="1">
    <source>
        <dbReference type="HAMAP-Rule" id="MF_00181"/>
    </source>
</evidence>
<evidence type="ECO:0007829" key="2">
    <source>
        <dbReference type="PDB" id="3JRU"/>
    </source>
</evidence>
<organism>
    <name type="scientific">Xanthomonas oryzae pv. oryzae (strain KACC10331 / KXO85)</name>
    <dbReference type="NCBI Taxonomy" id="291331"/>
    <lineage>
        <taxon>Bacteria</taxon>
        <taxon>Pseudomonadati</taxon>
        <taxon>Pseudomonadota</taxon>
        <taxon>Gammaproteobacteria</taxon>
        <taxon>Lysobacterales</taxon>
        <taxon>Lysobacteraceae</taxon>
        <taxon>Xanthomonas</taxon>
    </lineage>
</organism>